<accession>B3QUN0</accession>
<protein>
    <recommendedName>
        <fullName evidence="1">Ribosome maturation factor RimP</fullName>
    </recommendedName>
</protein>
<evidence type="ECO:0000255" key="1">
    <source>
        <dbReference type="HAMAP-Rule" id="MF_01077"/>
    </source>
</evidence>
<comment type="function">
    <text evidence="1">Required for maturation of 30S ribosomal subunits.</text>
</comment>
<comment type="subcellular location">
    <subcellularLocation>
        <location evidence="1">Cytoplasm</location>
    </subcellularLocation>
</comment>
<comment type="similarity">
    <text evidence="1">Belongs to the RimP family.</text>
</comment>
<feature type="chain" id="PRO_0000384628" description="Ribosome maturation factor RimP">
    <location>
        <begin position="1"/>
        <end position="182"/>
    </location>
</feature>
<organism>
    <name type="scientific">Chloroherpeton thalassium (strain ATCC 35110 / GB-78)</name>
    <dbReference type="NCBI Taxonomy" id="517418"/>
    <lineage>
        <taxon>Bacteria</taxon>
        <taxon>Pseudomonadati</taxon>
        <taxon>Chlorobiota</taxon>
        <taxon>Chlorobiia</taxon>
        <taxon>Chlorobiales</taxon>
        <taxon>Chloroherpetonaceae</taxon>
        <taxon>Chloroherpeton</taxon>
    </lineage>
</organism>
<name>RIMP_CHLT3</name>
<proteinExistence type="inferred from homology"/>
<dbReference type="EMBL" id="CP001100">
    <property type="protein sequence ID" value="ACF12936.1"/>
    <property type="molecule type" value="Genomic_DNA"/>
</dbReference>
<dbReference type="RefSeq" id="WP_012499020.1">
    <property type="nucleotide sequence ID" value="NC_011026.1"/>
</dbReference>
<dbReference type="SMR" id="B3QUN0"/>
<dbReference type="STRING" id="517418.Ctha_0465"/>
<dbReference type="KEGG" id="cts:Ctha_0465"/>
<dbReference type="eggNOG" id="COG0779">
    <property type="taxonomic scope" value="Bacteria"/>
</dbReference>
<dbReference type="HOGENOM" id="CLU_070525_3_1_10"/>
<dbReference type="OrthoDB" id="9789702at2"/>
<dbReference type="Proteomes" id="UP000001208">
    <property type="component" value="Chromosome"/>
</dbReference>
<dbReference type="GO" id="GO:0005829">
    <property type="term" value="C:cytosol"/>
    <property type="evidence" value="ECO:0007669"/>
    <property type="project" value="TreeGrafter"/>
</dbReference>
<dbReference type="GO" id="GO:0000028">
    <property type="term" value="P:ribosomal small subunit assembly"/>
    <property type="evidence" value="ECO:0007669"/>
    <property type="project" value="TreeGrafter"/>
</dbReference>
<dbReference type="GO" id="GO:0006412">
    <property type="term" value="P:translation"/>
    <property type="evidence" value="ECO:0007669"/>
    <property type="project" value="TreeGrafter"/>
</dbReference>
<dbReference type="CDD" id="cd01734">
    <property type="entry name" value="YlxS_C"/>
    <property type="match status" value="1"/>
</dbReference>
<dbReference type="Gene3D" id="3.30.300.70">
    <property type="entry name" value="RimP-like superfamily, N-terminal"/>
    <property type="match status" value="1"/>
</dbReference>
<dbReference type="HAMAP" id="MF_01077">
    <property type="entry name" value="RimP"/>
    <property type="match status" value="1"/>
</dbReference>
<dbReference type="InterPro" id="IPR003728">
    <property type="entry name" value="Ribosome_maturation_RimP"/>
</dbReference>
<dbReference type="InterPro" id="IPR028998">
    <property type="entry name" value="RimP_C"/>
</dbReference>
<dbReference type="InterPro" id="IPR028989">
    <property type="entry name" value="RimP_N"/>
</dbReference>
<dbReference type="InterPro" id="IPR035956">
    <property type="entry name" value="RimP_N_sf"/>
</dbReference>
<dbReference type="PANTHER" id="PTHR33867">
    <property type="entry name" value="RIBOSOME MATURATION FACTOR RIMP"/>
    <property type="match status" value="1"/>
</dbReference>
<dbReference type="PANTHER" id="PTHR33867:SF1">
    <property type="entry name" value="RIBOSOME MATURATION FACTOR RIMP"/>
    <property type="match status" value="1"/>
</dbReference>
<dbReference type="Pfam" id="PF17384">
    <property type="entry name" value="DUF150_C"/>
    <property type="match status" value="1"/>
</dbReference>
<dbReference type="Pfam" id="PF02576">
    <property type="entry name" value="RimP_N"/>
    <property type="match status" value="1"/>
</dbReference>
<dbReference type="SUPFAM" id="SSF75420">
    <property type="entry name" value="YhbC-like, N-terminal domain"/>
    <property type="match status" value="1"/>
</dbReference>
<gene>
    <name evidence="1" type="primary">rimP</name>
    <name type="ordered locus">Ctha_0465</name>
</gene>
<sequence>MMDSRLKLIQDWLLQLLAEMTVSDPDGNEHEVFLVDIEVHSNKTIDIIEVFADTDSGISVENCKFLSKHISAELDASEEMQALLPRHFKLVVSSPGLSRPLTMNRQYKKNIGRLMQVTYQNADGEIKTIDGRFISLEEEAEASITLDITKIQKSKPNAKPKPPELVTIPFSQIQKAIVQVEF</sequence>
<reference key="1">
    <citation type="submission" date="2008-06" db="EMBL/GenBank/DDBJ databases">
        <title>Complete sequence of Chloroherpeton thalassium ATCC 35110.</title>
        <authorList>
            <consortium name="US DOE Joint Genome Institute"/>
            <person name="Lucas S."/>
            <person name="Copeland A."/>
            <person name="Lapidus A."/>
            <person name="Glavina del Rio T."/>
            <person name="Dalin E."/>
            <person name="Tice H."/>
            <person name="Bruce D."/>
            <person name="Goodwin L."/>
            <person name="Pitluck S."/>
            <person name="Schmutz J."/>
            <person name="Larimer F."/>
            <person name="Land M."/>
            <person name="Hauser L."/>
            <person name="Kyrpides N."/>
            <person name="Mikhailova N."/>
            <person name="Liu Z."/>
            <person name="Li T."/>
            <person name="Zhao F."/>
            <person name="Overmann J."/>
            <person name="Bryant D.A."/>
            <person name="Richardson P."/>
        </authorList>
    </citation>
    <scope>NUCLEOTIDE SEQUENCE [LARGE SCALE GENOMIC DNA]</scope>
    <source>
        <strain>ATCC 35110 / GB-78</strain>
    </source>
</reference>
<keyword id="KW-0963">Cytoplasm</keyword>
<keyword id="KW-1185">Reference proteome</keyword>
<keyword id="KW-0690">Ribosome biogenesis</keyword>